<accession>A6MFK9</accession>
<dbReference type="EMBL" id="DQ917520">
    <property type="protein sequence ID" value="ABK63549.1"/>
    <property type="molecule type" value="mRNA"/>
</dbReference>
<dbReference type="SMR" id="A6MFK9"/>
<dbReference type="GO" id="GO:0005576">
    <property type="term" value="C:extracellular region"/>
    <property type="evidence" value="ECO:0007669"/>
    <property type="project" value="UniProtKB-SubCell"/>
</dbReference>
<dbReference type="GO" id="GO:0099106">
    <property type="term" value="F:ion channel regulator activity"/>
    <property type="evidence" value="ECO:0007669"/>
    <property type="project" value="UniProtKB-KW"/>
</dbReference>
<dbReference type="GO" id="GO:0090729">
    <property type="term" value="F:toxin activity"/>
    <property type="evidence" value="ECO:0007669"/>
    <property type="project" value="UniProtKB-KW"/>
</dbReference>
<dbReference type="CDD" id="cd05383">
    <property type="entry name" value="CAP_CRISP"/>
    <property type="match status" value="1"/>
</dbReference>
<dbReference type="FunFam" id="1.10.10.740:FF:000001">
    <property type="entry name" value="Cysteine-rich secretory protein 2"/>
    <property type="match status" value="1"/>
</dbReference>
<dbReference type="FunFam" id="3.40.33.10:FF:000005">
    <property type="entry name" value="Cysteine-rich secretory protein 2"/>
    <property type="match status" value="1"/>
</dbReference>
<dbReference type="Gene3D" id="3.40.33.10">
    <property type="entry name" value="CAP"/>
    <property type="match status" value="1"/>
</dbReference>
<dbReference type="Gene3D" id="1.10.10.740">
    <property type="entry name" value="Crisp domain"/>
    <property type="match status" value="1"/>
</dbReference>
<dbReference type="InterPro" id="IPR018244">
    <property type="entry name" value="Allrgn_V5/Tpx1_CS"/>
</dbReference>
<dbReference type="InterPro" id="IPR014044">
    <property type="entry name" value="CAP_dom"/>
</dbReference>
<dbReference type="InterPro" id="IPR035940">
    <property type="entry name" value="CAP_sf"/>
</dbReference>
<dbReference type="InterPro" id="IPR042076">
    <property type="entry name" value="Crisp-like_dom"/>
</dbReference>
<dbReference type="InterPro" id="IPR001283">
    <property type="entry name" value="CRISP-related"/>
</dbReference>
<dbReference type="InterPro" id="IPR013871">
    <property type="entry name" value="Cysteine_rich_secretory"/>
</dbReference>
<dbReference type="InterPro" id="IPR034117">
    <property type="entry name" value="SCP_CRISP"/>
</dbReference>
<dbReference type="InterPro" id="IPR003582">
    <property type="entry name" value="ShKT_dom"/>
</dbReference>
<dbReference type="PANTHER" id="PTHR10334">
    <property type="entry name" value="CYSTEINE-RICH SECRETORY PROTEIN-RELATED"/>
    <property type="match status" value="1"/>
</dbReference>
<dbReference type="Pfam" id="PF00188">
    <property type="entry name" value="CAP"/>
    <property type="match status" value="1"/>
</dbReference>
<dbReference type="Pfam" id="PF08562">
    <property type="entry name" value="Crisp"/>
    <property type="match status" value="1"/>
</dbReference>
<dbReference type="PRINTS" id="PR00837">
    <property type="entry name" value="V5TPXLIKE"/>
</dbReference>
<dbReference type="SMART" id="SM00198">
    <property type="entry name" value="SCP"/>
    <property type="match status" value="1"/>
</dbReference>
<dbReference type="SUPFAM" id="SSF57546">
    <property type="entry name" value="Crisp domain-like"/>
    <property type="match status" value="1"/>
</dbReference>
<dbReference type="SUPFAM" id="SSF55797">
    <property type="entry name" value="PR-1-like"/>
    <property type="match status" value="1"/>
</dbReference>
<dbReference type="PROSITE" id="PS01009">
    <property type="entry name" value="CRISP_1"/>
    <property type="match status" value="1"/>
</dbReference>
<dbReference type="PROSITE" id="PS01010">
    <property type="entry name" value="CRISP_2"/>
    <property type="match status" value="1"/>
</dbReference>
<dbReference type="PROSITE" id="PS51670">
    <property type="entry name" value="SHKT"/>
    <property type="match status" value="1"/>
</dbReference>
<name>CRVP_DEMVE</name>
<feature type="signal peptide" evidence="2">
    <location>
        <begin position="1"/>
        <end position="19"/>
    </location>
</feature>
<feature type="propeptide" id="PRO_0000380669" evidence="1">
    <location>
        <begin position="20"/>
        <end position="27"/>
    </location>
</feature>
<feature type="chain" id="PRO_5000254113" description="Cysteine-rich venom protein">
    <location>
        <begin position="28"/>
        <end position="238"/>
    </location>
</feature>
<feature type="domain" description="SCP">
    <location>
        <begin position="39"/>
        <end position="164"/>
    </location>
</feature>
<feature type="domain" description="ShKT" evidence="3">
    <location>
        <begin position="200"/>
        <end position="233"/>
    </location>
</feature>
<feature type="disulfide bond" evidence="3">
    <location>
        <begin position="75"/>
        <end position="153"/>
    </location>
</feature>
<feature type="disulfide bond" evidence="3">
    <location>
        <begin position="92"/>
        <end position="165"/>
    </location>
</feature>
<feature type="disulfide bond" evidence="3">
    <location>
        <begin position="148"/>
        <end position="162"/>
    </location>
</feature>
<feature type="disulfide bond" evidence="3">
    <location>
        <begin position="184"/>
        <end position="191"/>
    </location>
</feature>
<feature type="disulfide bond" evidence="3">
    <location>
        <begin position="187"/>
        <end position="196"/>
    </location>
</feature>
<feature type="disulfide bond" evidence="3">
    <location>
        <begin position="200"/>
        <end position="233"/>
    </location>
</feature>
<feature type="disulfide bond" evidence="3">
    <location>
        <begin position="209"/>
        <end position="227"/>
    </location>
</feature>
<feature type="disulfide bond" evidence="3">
    <location>
        <begin position="218"/>
        <end position="231"/>
    </location>
</feature>
<evidence type="ECO:0000250" key="1"/>
<evidence type="ECO:0000255" key="2"/>
<evidence type="ECO:0000255" key="3">
    <source>
        <dbReference type="PROSITE-ProRule" id="PRU01005"/>
    </source>
</evidence>
<evidence type="ECO:0000305" key="4"/>
<comment type="function">
    <text evidence="1">Blocks olfactory (CNGA2) and retinal (CNGA1) cyclic nucleotide-gated (CNG) ion channel currents. Does not inhibit retinal (CNGA3) currents. It forms high-affinity contacts with the pore turret region and most likely inhibits CNG channel current by blocking the external entrance to the transmembrane pore. Does not affect neither depolarization- nor caffeine-induced contraction arterial smooth muscle (By similarity).</text>
</comment>
<comment type="subcellular location">
    <subcellularLocation>
        <location evidence="1">Secreted</location>
    </subcellularLocation>
</comment>
<comment type="tissue specificity">
    <text>Expressed by the venom gland.</text>
</comment>
<comment type="similarity">
    <text evidence="4">Belongs to the CRISP family.</text>
</comment>
<reference key="1">
    <citation type="journal article" date="2007" name="J. Proteome Res.">
        <title>Diversity of toxic components from the venom of the evolutionarily distinct black whip snake, Demansia vestigiata.</title>
        <authorList>
            <person name="St Pierre L."/>
            <person name="Birrell G.W."/>
            <person name="Earl S.T.H."/>
            <person name="Wallis T.P."/>
            <person name="Gorman J.J."/>
            <person name="de Jersey J."/>
            <person name="Masci P.P."/>
            <person name="Lavin M.F."/>
        </authorList>
    </citation>
    <scope>NUCLEOTIDE SEQUENCE [LARGE SCALE MRNA]</scope>
    <source>
        <tissue>Venom gland</tissue>
    </source>
</reference>
<protein>
    <recommendedName>
        <fullName>Cysteine-rich venom protein</fullName>
        <shortName>CRVP</shortName>
    </recommendedName>
    <alternativeName>
        <fullName>Cysteine-rich secretory protein</fullName>
        <shortName>CRISP</shortName>
    </alternativeName>
</protein>
<organism>
    <name type="scientific">Demansia vestigiata</name>
    <name type="common">Lesser black whip snake</name>
    <name type="synonym">Demansia atra</name>
    <dbReference type="NCBI Taxonomy" id="412038"/>
    <lineage>
        <taxon>Eukaryota</taxon>
        <taxon>Metazoa</taxon>
        <taxon>Chordata</taxon>
        <taxon>Craniata</taxon>
        <taxon>Vertebrata</taxon>
        <taxon>Euteleostomi</taxon>
        <taxon>Lepidosauria</taxon>
        <taxon>Squamata</taxon>
        <taxon>Bifurcata</taxon>
        <taxon>Unidentata</taxon>
        <taxon>Episquamata</taxon>
        <taxon>Toxicofera</taxon>
        <taxon>Serpentes</taxon>
        <taxon>Colubroidea</taxon>
        <taxon>Elapidae</taxon>
        <taxon>Notechinae</taxon>
        <taxon>Demansia</taxon>
    </lineage>
</organism>
<keyword id="KW-1015">Disulfide bond</keyword>
<keyword id="KW-0872">Ion channel impairing toxin</keyword>
<keyword id="KW-0528">Neurotoxin</keyword>
<keyword id="KW-0964">Secreted</keyword>
<keyword id="KW-0732">Signal</keyword>
<keyword id="KW-0800">Toxin</keyword>
<sequence length="238" mass="26470">MIAFIVLLSLAAVLQQSSGTVDFASESSNKGENQKQIVKKHNALRRSVKPPARNMLQMEWNSRAAQNAKRWAERCSFTHSPPSLRTVGKLRCGENLLQSSQPLPWSKVVQAWYDENKNFVYGIGAKPPGSVVGHYTQVVWYKSRLLGCASVKCSPTKYLYVCQYCPAGNIIGSQATPYKSGPRCADCPSACVKGLCTNPCKREDDYSNCKSLAEKNKCMEEWMKSKCPASCFCHNKII</sequence>
<proteinExistence type="evidence at transcript level"/>